<feature type="chain" id="PRO_1000203723" description="Elongation factor P--(R)-beta-lysine ligase">
    <location>
        <begin position="1"/>
        <end position="325"/>
    </location>
</feature>
<feature type="binding site" evidence="1">
    <location>
        <begin position="76"/>
        <end position="78"/>
    </location>
    <ligand>
        <name>substrate</name>
    </ligand>
</feature>
<feature type="binding site" evidence="1">
    <location>
        <begin position="100"/>
        <end position="102"/>
    </location>
    <ligand>
        <name>ATP</name>
        <dbReference type="ChEBI" id="CHEBI:30616"/>
    </ligand>
</feature>
<feature type="binding site" evidence="1">
    <location>
        <position position="109"/>
    </location>
    <ligand>
        <name>ATP</name>
        <dbReference type="ChEBI" id="CHEBI:30616"/>
    </ligand>
</feature>
<feature type="binding site" evidence="1">
    <location>
        <position position="118"/>
    </location>
    <ligand>
        <name>substrate</name>
    </ligand>
</feature>
<feature type="binding site" evidence="1">
    <location>
        <begin position="244"/>
        <end position="245"/>
    </location>
    <ligand>
        <name>ATP</name>
        <dbReference type="ChEBI" id="CHEBI:30616"/>
    </ligand>
</feature>
<feature type="binding site" evidence="1">
    <location>
        <position position="251"/>
    </location>
    <ligand>
        <name>substrate</name>
    </ligand>
</feature>
<feature type="binding site" evidence="1">
    <location>
        <position position="300"/>
    </location>
    <ligand>
        <name>ATP</name>
        <dbReference type="ChEBI" id="CHEBI:30616"/>
    </ligand>
</feature>
<sequence length="325" mass="36803">MSDMASWQPSAPVANLLKRASILSTIRRFFSDRGVLEVDTPSMSQATVTDVHLVPFQTHFVGPGVAQGMMLYLMTSPEYHMKRLLAAGSGPIYQLCRSFRNEESGRYHNPEFTMLEWYRPHYDMYRLMNEVDDLLQQVLECESAETLSYQQAFIRHLDVDPLSADKTQLREVAAKLDLSNVADNEEDRDTLLQLLFAFGVEPHIGKERPVFVYHFPASQASLAQISTEDHRVAERFEVYYRGVELANGFHELTDAAEQRQRFEQDNRKRAAAGLPQQPIDEHLLAALEHGMPDSSGVALGVDRLIMLALSAERLSEVIAFSVDRA</sequence>
<comment type="function">
    <text evidence="1">With EpmB is involved in the beta-lysylation step of the post-translational modification of translation elongation factor P (EF-P). Catalyzes the ATP-dependent activation of (R)-beta-lysine produced by EpmB, forming a lysyl-adenylate, from which the beta-lysyl moiety is then transferred to the epsilon-amino group of a conserved specific lysine residue in EF-P.</text>
</comment>
<comment type="catalytic activity">
    <reaction evidence="1">
        <text>D-beta-lysine + L-lysyl-[protein] + ATP = N(6)-((3R)-3,6-diaminohexanoyl)-L-lysyl-[protein] + AMP + diphosphate + H(+)</text>
        <dbReference type="Rhea" id="RHEA:83435"/>
        <dbReference type="Rhea" id="RHEA-COMP:9752"/>
        <dbReference type="Rhea" id="RHEA-COMP:20131"/>
        <dbReference type="ChEBI" id="CHEBI:15378"/>
        <dbReference type="ChEBI" id="CHEBI:29969"/>
        <dbReference type="ChEBI" id="CHEBI:30616"/>
        <dbReference type="ChEBI" id="CHEBI:33019"/>
        <dbReference type="ChEBI" id="CHEBI:84138"/>
        <dbReference type="ChEBI" id="CHEBI:156053"/>
        <dbReference type="ChEBI" id="CHEBI:456215"/>
    </reaction>
    <physiologicalReaction direction="left-to-right" evidence="1">
        <dbReference type="Rhea" id="RHEA:83436"/>
    </physiologicalReaction>
</comment>
<comment type="subunit">
    <text evidence="1">Homodimer.</text>
</comment>
<comment type="similarity">
    <text evidence="1">Belongs to the class-II aminoacyl-tRNA synthetase family. EpmA subfamily.</text>
</comment>
<proteinExistence type="inferred from homology"/>
<name>EPMA_EDWI9</name>
<organism>
    <name type="scientific">Edwardsiella ictaluri (strain 93-146)</name>
    <dbReference type="NCBI Taxonomy" id="634503"/>
    <lineage>
        <taxon>Bacteria</taxon>
        <taxon>Pseudomonadati</taxon>
        <taxon>Pseudomonadota</taxon>
        <taxon>Gammaproteobacteria</taxon>
        <taxon>Enterobacterales</taxon>
        <taxon>Hafniaceae</taxon>
        <taxon>Edwardsiella</taxon>
    </lineage>
</organism>
<protein>
    <recommendedName>
        <fullName evidence="1">Elongation factor P--(R)-beta-lysine ligase</fullName>
        <shortName evidence="1">EF-P--(R)-beta-lysine ligase</shortName>
        <ecNumber evidence="1">6.3.2.-</ecNumber>
    </recommendedName>
    <alternativeName>
        <fullName evidence="1">EF-P post-translational modification enzyme A</fullName>
    </alternativeName>
    <alternativeName>
        <fullName evidence="1">EF-P-lysine lysyltransferase</fullName>
    </alternativeName>
</protein>
<gene>
    <name evidence="1" type="primary">epmA</name>
    <name type="synonym">yjeA</name>
    <name type="ordered locus">NT01EI_0394</name>
</gene>
<keyword id="KW-0067">ATP-binding</keyword>
<keyword id="KW-0436">Ligase</keyword>
<keyword id="KW-0547">Nucleotide-binding</keyword>
<reference key="1">
    <citation type="submission" date="2009-03" db="EMBL/GenBank/DDBJ databases">
        <title>Complete genome sequence of Edwardsiella ictaluri 93-146.</title>
        <authorList>
            <person name="Williams M.L."/>
            <person name="Gillaspy A.F."/>
            <person name="Dyer D.W."/>
            <person name="Thune R.L."/>
            <person name="Waldbieser G.C."/>
            <person name="Schuster S.C."/>
            <person name="Gipson J."/>
            <person name="Zaitshik J."/>
            <person name="Landry C."/>
            <person name="Lawrence M.L."/>
        </authorList>
    </citation>
    <scope>NUCLEOTIDE SEQUENCE [LARGE SCALE GENOMIC DNA]</scope>
    <source>
        <strain>93-146</strain>
    </source>
</reference>
<dbReference type="EC" id="6.3.2.-" evidence="1"/>
<dbReference type="EMBL" id="CP001600">
    <property type="protein sequence ID" value="ACR67635.1"/>
    <property type="molecule type" value="Genomic_DNA"/>
</dbReference>
<dbReference type="RefSeq" id="WP_015869841.1">
    <property type="nucleotide sequence ID" value="NZ_CP169062.1"/>
</dbReference>
<dbReference type="SMR" id="C5BDL9"/>
<dbReference type="STRING" id="67780.B6E78_12750"/>
<dbReference type="GeneID" id="69537483"/>
<dbReference type="KEGG" id="eic:NT01EI_0394"/>
<dbReference type="PATRIC" id="fig|634503.3.peg.357"/>
<dbReference type="HOGENOM" id="CLU_008255_1_1_6"/>
<dbReference type="OrthoDB" id="9802326at2"/>
<dbReference type="Proteomes" id="UP000001485">
    <property type="component" value="Chromosome"/>
</dbReference>
<dbReference type="GO" id="GO:0005829">
    <property type="term" value="C:cytosol"/>
    <property type="evidence" value="ECO:0007669"/>
    <property type="project" value="TreeGrafter"/>
</dbReference>
<dbReference type="GO" id="GO:0016880">
    <property type="term" value="F:acid-ammonia (or amide) ligase activity"/>
    <property type="evidence" value="ECO:0007669"/>
    <property type="project" value="UniProtKB-UniRule"/>
</dbReference>
<dbReference type="GO" id="GO:0005524">
    <property type="term" value="F:ATP binding"/>
    <property type="evidence" value="ECO:0007669"/>
    <property type="project" value="UniProtKB-UniRule"/>
</dbReference>
<dbReference type="GO" id="GO:0004824">
    <property type="term" value="F:lysine-tRNA ligase activity"/>
    <property type="evidence" value="ECO:0007669"/>
    <property type="project" value="InterPro"/>
</dbReference>
<dbReference type="GO" id="GO:0000049">
    <property type="term" value="F:tRNA binding"/>
    <property type="evidence" value="ECO:0007669"/>
    <property type="project" value="TreeGrafter"/>
</dbReference>
<dbReference type="GO" id="GO:0006430">
    <property type="term" value="P:lysyl-tRNA aminoacylation"/>
    <property type="evidence" value="ECO:0007669"/>
    <property type="project" value="InterPro"/>
</dbReference>
<dbReference type="FunFam" id="3.30.930.10:FF:000017">
    <property type="entry name" value="Elongation factor P--(R)-beta-lysine ligase"/>
    <property type="match status" value="1"/>
</dbReference>
<dbReference type="Gene3D" id="3.30.930.10">
    <property type="entry name" value="Bira Bifunctional Protein, Domain 2"/>
    <property type="match status" value="1"/>
</dbReference>
<dbReference type="HAMAP" id="MF_00174">
    <property type="entry name" value="EF_P_modif_A"/>
    <property type="match status" value="1"/>
</dbReference>
<dbReference type="InterPro" id="IPR004364">
    <property type="entry name" value="Aa-tRNA-synt_II"/>
</dbReference>
<dbReference type="InterPro" id="IPR006195">
    <property type="entry name" value="aa-tRNA-synth_II"/>
</dbReference>
<dbReference type="InterPro" id="IPR045864">
    <property type="entry name" value="aa-tRNA-synth_II/BPL/LPL"/>
</dbReference>
<dbReference type="InterPro" id="IPR004525">
    <property type="entry name" value="EpmA"/>
</dbReference>
<dbReference type="InterPro" id="IPR018149">
    <property type="entry name" value="Lys-tRNA-synth_II_C"/>
</dbReference>
<dbReference type="NCBIfam" id="TIGR00462">
    <property type="entry name" value="genX"/>
    <property type="match status" value="1"/>
</dbReference>
<dbReference type="NCBIfam" id="NF006828">
    <property type="entry name" value="PRK09350.1"/>
    <property type="match status" value="1"/>
</dbReference>
<dbReference type="PANTHER" id="PTHR42918:SF6">
    <property type="entry name" value="ELONGATION FACTOR P--(R)-BETA-LYSINE LIGASE"/>
    <property type="match status" value="1"/>
</dbReference>
<dbReference type="PANTHER" id="PTHR42918">
    <property type="entry name" value="LYSYL-TRNA SYNTHETASE"/>
    <property type="match status" value="1"/>
</dbReference>
<dbReference type="Pfam" id="PF00152">
    <property type="entry name" value="tRNA-synt_2"/>
    <property type="match status" value="1"/>
</dbReference>
<dbReference type="PRINTS" id="PR00982">
    <property type="entry name" value="TRNASYNTHLYS"/>
</dbReference>
<dbReference type="SUPFAM" id="SSF55681">
    <property type="entry name" value="Class II aaRS and biotin synthetases"/>
    <property type="match status" value="1"/>
</dbReference>
<dbReference type="PROSITE" id="PS50862">
    <property type="entry name" value="AA_TRNA_LIGASE_II"/>
    <property type="match status" value="1"/>
</dbReference>
<evidence type="ECO:0000255" key="1">
    <source>
        <dbReference type="HAMAP-Rule" id="MF_00174"/>
    </source>
</evidence>
<accession>C5BDL9</accession>